<gene>
    <name type="primary">nirC</name>
    <name type="ordered locus">STM3476</name>
</gene>
<keyword id="KW-0997">Cell inner membrane</keyword>
<keyword id="KW-1003">Cell membrane</keyword>
<keyword id="KW-0472">Membrane</keyword>
<keyword id="KW-0534">Nitrate assimilation</keyword>
<keyword id="KW-1185">Reference proteome</keyword>
<keyword id="KW-0812">Transmembrane</keyword>
<keyword id="KW-1133">Transmembrane helix</keyword>
<keyword id="KW-0813">Transport</keyword>
<dbReference type="EMBL" id="M64606">
    <property type="protein sequence ID" value="AAA27040.1"/>
    <property type="molecule type" value="Genomic_DNA"/>
</dbReference>
<dbReference type="EMBL" id="AE006468">
    <property type="protein sequence ID" value="AAL22338.1"/>
    <property type="molecule type" value="Genomic_DNA"/>
</dbReference>
<dbReference type="PIR" id="A39200">
    <property type="entry name" value="A39200"/>
</dbReference>
<dbReference type="RefSeq" id="NP_462379.1">
    <property type="nucleotide sequence ID" value="NC_003197.2"/>
</dbReference>
<dbReference type="RefSeq" id="WP_000493569.1">
    <property type="nucleotide sequence ID" value="NC_003197.2"/>
</dbReference>
<dbReference type="SMR" id="P25926"/>
<dbReference type="DIP" id="DIP-60084N"/>
<dbReference type="STRING" id="99287.STM3476"/>
<dbReference type="PaxDb" id="99287-STM3476"/>
<dbReference type="GeneID" id="1254999"/>
<dbReference type="KEGG" id="stm:STM3476"/>
<dbReference type="PATRIC" id="fig|99287.12.peg.3674"/>
<dbReference type="HOGENOM" id="CLU_036896_2_1_6"/>
<dbReference type="OMA" id="SIRPLVM"/>
<dbReference type="PhylomeDB" id="P25926"/>
<dbReference type="BioCyc" id="SENT99287:STM3476-MONOMER"/>
<dbReference type="Proteomes" id="UP000001014">
    <property type="component" value="Chromosome"/>
</dbReference>
<dbReference type="GO" id="GO:0005886">
    <property type="term" value="C:plasma membrane"/>
    <property type="evidence" value="ECO:0000318"/>
    <property type="project" value="GO_Central"/>
</dbReference>
<dbReference type="GO" id="GO:0015499">
    <property type="term" value="F:formate transmembrane transporter activity"/>
    <property type="evidence" value="ECO:0000318"/>
    <property type="project" value="GO_Central"/>
</dbReference>
<dbReference type="GO" id="GO:0015724">
    <property type="term" value="P:formate transport"/>
    <property type="evidence" value="ECO:0000318"/>
    <property type="project" value="GO_Central"/>
</dbReference>
<dbReference type="GO" id="GO:0042128">
    <property type="term" value="P:nitrate assimilation"/>
    <property type="evidence" value="ECO:0007669"/>
    <property type="project" value="UniProtKB-KW"/>
</dbReference>
<dbReference type="FunFam" id="1.20.1080.10:FF:000008">
    <property type="entry name" value="Nitrite transporter NirC"/>
    <property type="match status" value="1"/>
</dbReference>
<dbReference type="Gene3D" id="1.20.1080.10">
    <property type="entry name" value="Glycerol uptake facilitator protein"/>
    <property type="match status" value="1"/>
</dbReference>
<dbReference type="InterPro" id="IPR023271">
    <property type="entry name" value="Aquaporin-like"/>
</dbReference>
<dbReference type="InterPro" id="IPR000292">
    <property type="entry name" value="For/NO2_transpt"/>
</dbReference>
<dbReference type="InterPro" id="IPR024002">
    <property type="entry name" value="For/NO2_transpt_CS"/>
</dbReference>
<dbReference type="NCBIfam" id="TIGR00790">
    <property type="entry name" value="fnt"/>
    <property type="match status" value="1"/>
</dbReference>
<dbReference type="NCBIfam" id="NF008595">
    <property type="entry name" value="PRK11562.1"/>
    <property type="match status" value="1"/>
</dbReference>
<dbReference type="PANTHER" id="PTHR30520">
    <property type="entry name" value="FORMATE TRANSPORTER-RELATED"/>
    <property type="match status" value="1"/>
</dbReference>
<dbReference type="PANTHER" id="PTHR30520:SF8">
    <property type="entry name" value="NITRITE TRANSPORTER NIRC"/>
    <property type="match status" value="1"/>
</dbReference>
<dbReference type="Pfam" id="PF01226">
    <property type="entry name" value="Form_Nir_trans"/>
    <property type="match status" value="1"/>
</dbReference>
<dbReference type="PROSITE" id="PS01005">
    <property type="entry name" value="FORMATE_NITRITE_TP_1"/>
    <property type="match status" value="1"/>
</dbReference>
<dbReference type="PROSITE" id="PS01006">
    <property type="entry name" value="FORMATE_NITRITE_TP_2"/>
    <property type="match status" value="1"/>
</dbReference>
<protein>
    <recommendedName>
        <fullName>Nitrite transporter NirC</fullName>
    </recommendedName>
</protein>
<sequence length="269" mass="28636">MFTDTINKCAANAARIARLSANNPLGFWVSSAMAGAYVGLGIILIFTLGNLLDPSVRPLVMGATFGIALTLVIIAGSELFTGHTMFLTLGVKAGTISHGQMWAILPQTWLGNLVGSVFVALLYSWGGGSLLPVDTSIVHSVALAKTTAPATVLFFKGALCNWLVCLAIWMAIRTEGTAKFLAIWWCLLAFIASGYEHSVANMTLFALSWFGHHSDAYTLAGIGHNLLWVTLGNTLSGVVFMGLGYWYATPKSERPAPAKINQPEAAANN</sequence>
<name>NIRC_SALTY</name>
<evidence type="ECO:0000250" key="1"/>
<evidence type="ECO:0000255" key="2"/>
<evidence type="ECO:0000305" key="3"/>
<organism>
    <name type="scientific">Salmonella typhimurium (strain LT2 / SGSC1412 / ATCC 700720)</name>
    <dbReference type="NCBI Taxonomy" id="99287"/>
    <lineage>
        <taxon>Bacteria</taxon>
        <taxon>Pseudomonadati</taxon>
        <taxon>Pseudomonadota</taxon>
        <taxon>Gammaproteobacteria</taxon>
        <taxon>Enterobacterales</taxon>
        <taxon>Enterobacteriaceae</taxon>
        <taxon>Salmonella</taxon>
    </lineage>
</organism>
<accession>P25926</accession>
<feature type="chain" id="PRO_0000094725" description="Nitrite transporter NirC">
    <location>
        <begin position="1"/>
        <end position="269"/>
    </location>
</feature>
<feature type="topological domain" description="Cytoplasmic" evidence="2">
    <location>
        <begin position="1"/>
        <end position="29"/>
    </location>
</feature>
<feature type="transmembrane region" description="Helical" evidence="2">
    <location>
        <begin position="30"/>
        <end position="46"/>
    </location>
</feature>
<feature type="topological domain" description="Extracellular" evidence="2">
    <location>
        <begin position="47"/>
        <end position="58"/>
    </location>
</feature>
<feature type="transmembrane region" description="Helical" evidence="2">
    <location>
        <begin position="59"/>
        <end position="75"/>
    </location>
</feature>
<feature type="topological domain" description="Cytoplasmic" evidence="2">
    <location>
        <begin position="76"/>
        <end position="107"/>
    </location>
</feature>
<feature type="transmembrane region" description="Helical" evidence="2">
    <location>
        <begin position="108"/>
        <end position="125"/>
    </location>
</feature>
<feature type="topological domain" description="Extracellular" evidence="2">
    <location>
        <begin position="126"/>
        <end position="153"/>
    </location>
</feature>
<feature type="transmembrane region" description="Helical" evidence="2">
    <location>
        <begin position="154"/>
        <end position="172"/>
    </location>
</feature>
<feature type="topological domain" description="Cytoplasmic" evidence="2">
    <location>
        <begin position="173"/>
        <end position="179"/>
    </location>
</feature>
<feature type="transmembrane region" description="Helical" evidence="2">
    <location>
        <begin position="180"/>
        <end position="195"/>
    </location>
</feature>
<feature type="topological domain" description="Extracellular" evidence="2">
    <location>
        <begin position="196"/>
        <end position="230"/>
    </location>
</feature>
<feature type="transmembrane region" description="Helical" evidence="2">
    <location>
        <begin position="231"/>
        <end position="250"/>
    </location>
</feature>
<feature type="topological domain" description="Cytoplasmic" evidence="2">
    <location>
        <begin position="251"/>
        <end position="269"/>
    </location>
</feature>
<feature type="sequence conflict" description="In Ref. 1; AAA27040." evidence="3" ref="1">
    <original>T</original>
    <variation>S</variation>
    <location>
        <position position="5"/>
    </location>
</feature>
<feature type="sequence conflict" description="In Ref. 1; AAA27040." evidence="3" ref="1">
    <original>NAARIARL</original>
    <variation>KLRASAPV</variation>
    <location>
        <begin position="12"/>
        <end position="19"/>
    </location>
</feature>
<comment type="function">
    <text evidence="1">Catalyzes nitrite uptake and nitrite export across the cytoplasmic membrane.</text>
</comment>
<comment type="subcellular location">
    <subcellularLocation>
        <location evidence="1">Cell inner membrane</location>
        <topology evidence="1">Multi-pass membrane protein</topology>
    </subcellularLocation>
</comment>
<comment type="similarity">
    <text evidence="3">Belongs to the FNT transporter (TC 1.A.16) family.</text>
</comment>
<proteinExistence type="inferred from homology"/>
<reference key="1">
    <citation type="journal article" date="1991" name="J. Bacteriol.">
        <title>High-level expression of Escherichia coli NADPH-sulfite reductase: requirement for a cloned cysG plasmid to overcome limiting siroheme cofactor.</title>
        <authorList>
            <person name="Wu J.Y."/>
            <person name="Siegel L.M."/>
            <person name="Kredich N.M."/>
        </authorList>
    </citation>
    <scope>NUCLEOTIDE SEQUENCE [GENOMIC DNA]</scope>
</reference>
<reference key="2">
    <citation type="journal article" date="2001" name="Nature">
        <title>Complete genome sequence of Salmonella enterica serovar Typhimurium LT2.</title>
        <authorList>
            <person name="McClelland M."/>
            <person name="Sanderson K.E."/>
            <person name="Spieth J."/>
            <person name="Clifton S.W."/>
            <person name="Latreille P."/>
            <person name="Courtney L."/>
            <person name="Porwollik S."/>
            <person name="Ali J."/>
            <person name="Dante M."/>
            <person name="Du F."/>
            <person name="Hou S."/>
            <person name="Layman D."/>
            <person name="Leonard S."/>
            <person name="Nguyen C."/>
            <person name="Scott K."/>
            <person name="Holmes A."/>
            <person name="Grewal N."/>
            <person name="Mulvaney E."/>
            <person name="Ryan E."/>
            <person name="Sun H."/>
            <person name="Florea L."/>
            <person name="Miller W."/>
            <person name="Stoneking T."/>
            <person name="Nhan M."/>
            <person name="Waterston R."/>
            <person name="Wilson R.K."/>
        </authorList>
    </citation>
    <scope>NUCLEOTIDE SEQUENCE [LARGE SCALE GENOMIC DNA]</scope>
    <source>
        <strain>LT2 / SGSC1412 / ATCC 700720</strain>
    </source>
</reference>